<feature type="chain" id="PRO_0000211043" description="Probable U3 small nucleolar RNA-associated protein 11">
    <location>
        <begin position="1"/>
        <end position="253"/>
    </location>
</feature>
<feature type="region of interest" description="Disordered" evidence="2">
    <location>
        <begin position="1"/>
        <end position="26"/>
    </location>
</feature>
<feature type="modified residue" description="Phosphothreonine" evidence="1">
    <location>
        <position position="90"/>
    </location>
</feature>
<feature type="modified residue" description="Phosphoserine" evidence="1">
    <location>
        <position position="241"/>
    </location>
</feature>
<feature type="cross-link" description="Glycyl lysine isopeptide (Lys-Gly) (interchain with G-Cter in SUMO2)" evidence="1">
    <location>
        <position position="74"/>
    </location>
</feature>
<feature type="cross-link" description="Glycyl lysine isopeptide (Lys-Gly) (interchain with G-Cter in SUMO2)" evidence="1">
    <location>
        <position position="83"/>
    </location>
</feature>
<feature type="cross-link" description="Glycyl lysine isopeptide (Lys-Gly) (interchain with G-Cter in SUMO2)" evidence="1">
    <location>
        <position position="86"/>
    </location>
</feature>
<feature type="cross-link" description="Glycyl lysine isopeptide (Lys-Gly) (interchain with G-Cter in SUMO2)" evidence="1">
    <location>
        <position position="103"/>
    </location>
</feature>
<feature type="cross-link" description="Glycyl lysine isopeptide (Lys-Gly) (interchain with G-Cter in SUMO2)" evidence="1">
    <location>
        <position position="120"/>
    </location>
</feature>
<feature type="cross-link" description="Glycyl lysine isopeptide (Lys-Gly) (interchain with G-Cter in SUMO2)" evidence="1">
    <location>
        <position position="143"/>
    </location>
</feature>
<feature type="cross-link" description="Glycyl lysine isopeptide (Lys-Gly) (interchain with G-Cter in SUMO2)" evidence="1">
    <location>
        <position position="144"/>
    </location>
</feature>
<feature type="cross-link" description="Glycyl lysine isopeptide (Lys-Gly) (interchain with G-Cter in SUMO2)" evidence="1">
    <location>
        <position position="180"/>
    </location>
</feature>
<feature type="cross-link" description="Glycyl lysine isopeptide (Lys-Gly) (interchain with G-Cter in SUMO2)" evidence="1">
    <location>
        <position position="218"/>
    </location>
</feature>
<feature type="cross-link" description="Glycyl lysine isopeptide (Lys-Gly) (interchain with G-Cter in SUMO2)" evidence="1">
    <location>
        <position position="235"/>
    </location>
</feature>
<feature type="cross-link" description="Glycyl lysine isopeptide (Lys-Gly) (interchain with G-Cter in SUMO2)" evidence="1">
    <location>
        <position position="236"/>
    </location>
</feature>
<name>UTP11_MOUSE</name>
<accession>Q9CZJ1</accession>
<accession>Q3UI21</accession>
<accession>Q9CVB5</accession>
<keyword id="KW-1017">Isopeptide bond</keyword>
<keyword id="KW-0539">Nucleus</keyword>
<keyword id="KW-0597">Phosphoprotein</keyword>
<keyword id="KW-1185">Reference proteome</keyword>
<keyword id="KW-0698">rRNA processing</keyword>
<keyword id="KW-0832">Ubl conjugation</keyword>
<sequence length="253" mass="30551">MSAAFRKAAKTRQREHRERSQPGFRKRLGLLEKKKDYKLRANDYHKKQDFLRALRKKALEKNPDEFYYKMTRAKLQDGVHIFKENKEEVTAEQLKLMRTQDIKYIEMKRVAEAKKIERLKSELHLLDFQGKQQKKHVFFFDTKKEVERFDVATHLQTAPELVDRVYNRPRIETLQKERVKGATPQTGLKRIAKERQKQYDCLTQRIEREKQLFVVAQKIQTRKDLMDKTQKVKVKKETVNSPAIYRFQTRRKR</sequence>
<gene>
    <name type="primary">Utp11</name>
    <name evidence="4" type="synonym">Utp11l</name>
</gene>
<reference key="1">
    <citation type="journal article" date="2005" name="Science">
        <title>The transcriptional landscape of the mammalian genome.</title>
        <authorList>
            <person name="Carninci P."/>
            <person name="Kasukawa T."/>
            <person name="Katayama S."/>
            <person name="Gough J."/>
            <person name="Frith M.C."/>
            <person name="Maeda N."/>
            <person name="Oyama R."/>
            <person name="Ravasi T."/>
            <person name="Lenhard B."/>
            <person name="Wells C."/>
            <person name="Kodzius R."/>
            <person name="Shimokawa K."/>
            <person name="Bajic V.B."/>
            <person name="Brenner S.E."/>
            <person name="Batalov S."/>
            <person name="Forrest A.R."/>
            <person name="Zavolan M."/>
            <person name="Davis M.J."/>
            <person name="Wilming L.G."/>
            <person name="Aidinis V."/>
            <person name="Allen J.E."/>
            <person name="Ambesi-Impiombato A."/>
            <person name="Apweiler R."/>
            <person name="Aturaliya R.N."/>
            <person name="Bailey T.L."/>
            <person name="Bansal M."/>
            <person name="Baxter L."/>
            <person name="Beisel K.W."/>
            <person name="Bersano T."/>
            <person name="Bono H."/>
            <person name="Chalk A.M."/>
            <person name="Chiu K.P."/>
            <person name="Choudhary V."/>
            <person name="Christoffels A."/>
            <person name="Clutterbuck D.R."/>
            <person name="Crowe M.L."/>
            <person name="Dalla E."/>
            <person name="Dalrymple B.P."/>
            <person name="de Bono B."/>
            <person name="Della Gatta G."/>
            <person name="di Bernardo D."/>
            <person name="Down T."/>
            <person name="Engstrom P."/>
            <person name="Fagiolini M."/>
            <person name="Faulkner G."/>
            <person name="Fletcher C.F."/>
            <person name="Fukushima T."/>
            <person name="Furuno M."/>
            <person name="Futaki S."/>
            <person name="Gariboldi M."/>
            <person name="Georgii-Hemming P."/>
            <person name="Gingeras T.R."/>
            <person name="Gojobori T."/>
            <person name="Green R.E."/>
            <person name="Gustincich S."/>
            <person name="Harbers M."/>
            <person name="Hayashi Y."/>
            <person name="Hensch T.K."/>
            <person name="Hirokawa N."/>
            <person name="Hill D."/>
            <person name="Huminiecki L."/>
            <person name="Iacono M."/>
            <person name="Ikeo K."/>
            <person name="Iwama A."/>
            <person name="Ishikawa T."/>
            <person name="Jakt M."/>
            <person name="Kanapin A."/>
            <person name="Katoh M."/>
            <person name="Kawasawa Y."/>
            <person name="Kelso J."/>
            <person name="Kitamura H."/>
            <person name="Kitano H."/>
            <person name="Kollias G."/>
            <person name="Krishnan S.P."/>
            <person name="Kruger A."/>
            <person name="Kummerfeld S.K."/>
            <person name="Kurochkin I.V."/>
            <person name="Lareau L.F."/>
            <person name="Lazarevic D."/>
            <person name="Lipovich L."/>
            <person name="Liu J."/>
            <person name="Liuni S."/>
            <person name="McWilliam S."/>
            <person name="Madan Babu M."/>
            <person name="Madera M."/>
            <person name="Marchionni L."/>
            <person name="Matsuda H."/>
            <person name="Matsuzawa S."/>
            <person name="Miki H."/>
            <person name="Mignone F."/>
            <person name="Miyake S."/>
            <person name="Morris K."/>
            <person name="Mottagui-Tabar S."/>
            <person name="Mulder N."/>
            <person name="Nakano N."/>
            <person name="Nakauchi H."/>
            <person name="Ng P."/>
            <person name="Nilsson R."/>
            <person name="Nishiguchi S."/>
            <person name="Nishikawa S."/>
            <person name="Nori F."/>
            <person name="Ohara O."/>
            <person name="Okazaki Y."/>
            <person name="Orlando V."/>
            <person name="Pang K.C."/>
            <person name="Pavan W.J."/>
            <person name="Pavesi G."/>
            <person name="Pesole G."/>
            <person name="Petrovsky N."/>
            <person name="Piazza S."/>
            <person name="Reed J."/>
            <person name="Reid J.F."/>
            <person name="Ring B.Z."/>
            <person name="Ringwald M."/>
            <person name="Rost B."/>
            <person name="Ruan Y."/>
            <person name="Salzberg S.L."/>
            <person name="Sandelin A."/>
            <person name="Schneider C."/>
            <person name="Schoenbach C."/>
            <person name="Sekiguchi K."/>
            <person name="Semple C.A."/>
            <person name="Seno S."/>
            <person name="Sessa L."/>
            <person name="Sheng Y."/>
            <person name="Shibata Y."/>
            <person name="Shimada H."/>
            <person name="Shimada K."/>
            <person name="Silva D."/>
            <person name="Sinclair B."/>
            <person name="Sperling S."/>
            <person name="Stupka E."/>
            <person name="Sugiura K."/>
            <person name="Sultana R."/>
            <person name="Takenaka Y."/>
            <person name="Taki K."/>
            <person name="Tammoja K."/>
            <person name="Tan S.L."/>
            <person name="Tang S."/>
            <person name="Taylor M.S."/>
            <person name="Tegner J."/>
            <person name="Teichmann S.A."/>
            <person name="Ueda H.R."/>
            <person name="van Nimwegen E."/>
            <person name="Verardo R."/>
            <person name="Wei C.L."/>
            <person name="Yagi K."/>
            <person name="Yamanishi H."/>
            <person name="Zabarovsky E."/>
            <person name="Zhu S."/>
            <person name="Zimmer A."/>
            <person name="Hide W."/>
            <person name="Bult C."/>
            <person name="Grimmond S.M."/>
            <person name="Teasdale R.D."/>
            <person name="Liu E.T."/>
            <person name="Brusic V."/>
            <person name="Quackenbush J."/>
            <person name="Wahlestedt C."/>
            <person name="Mattick J.S."/>
            <person name="Hume D.A."/>
            <person name="Kai C."/>
            <person name="Sasaki D."/>
            <person name="Tomaru Y."/>
            <person name="Fukuda S."/>
            <person name="Kanamori-Katayama M."/>
            <person name="Suzuki M."/>
            <person name="Aoki J."/>
            <person name="Arakawa T."/>
            <person name="Iida J."/>
            <person name="Imamura K."/>
            <person name="Itoh M."/>
            <person name="Kato T."/>
            <person name="Kawaji H."/>
            <person name="Kawagashira N."/>
            <person name="Kawashima T."/>
            <person name="Kojima M."/>
            <person name="Kondo S."/>
            <person name="Konno H."/>
            <person name="Nakano K."/>
            <person name="Ninomiya N."/>
            <person name="Nishio T."/>
            <person name="Okada M."/>
            <person name="Plessy C."/>
            <person name="Shibata K."/>
            <person name="Shiraki T."/>
            <person name="Suzuki S."/>
            <person name="Tagami M."/>
            <person name="Waki K."/>
            <person name="Watahiki A."/>
            <person name="Okamura-Oho Y."/>
            <person name="Suzuki H."/>
            <person name="Kawai J."/>
            <person name="Hayashizaki Y."/>
        </authorList>
    </citation>
    <scope>NUCLEOTIDE SEQUENCE [LARGE SCALE MRNA]</scope>
    <source>
        <strain>C57BL/6J</strain>
        <tissue>Amnion</tissue>
        <tissue>Embryo</tissue>
        <tissue>Mammary gland</tissue>
        <tissue>Stomach</tissue>
    </source>
</reference>
<reference key="2">
    <citation type="journal article" date="2004" name="Genome Res.">
        <title>The status, quality, and expansion of the NIH full-length cDNA project: the Mammalian Gene Collection (MGC).</title>
        <authorList>
            <consortium name="The MGC Project Team"/>
        </authorList>
    </citation>
    <scope>NUCLEOTIDE SEQUENCE [LARGE SCALE MRNA]</scope>
    <source>
        <tissue>Testis</tissue>
    </source>
</reference>
<proteinExistence type="evidence at transcript level"/>
<evidence type="ECO:0000250" key="1">
    <source>
        <dbReference type="UniProtKB" id="Q9Y3A2"/>
    </source>
</evidence>
<evidence type="ECO:0000256" key="2">
    <source>
        <dbReference type="SAM" id="MobiDB-lite"/>
    </source>
</evidence>
<evidence type="ECO:0000305" key="3"/>
<evidence type="ECO:0000312" key="4">
    <source>
        <dbReference type="MGI" id="MGI:1914455"/>
    </source>
</evidence>
<organism>
    <name type="scientific">Mus musculus</name>
    <name type="common">Mouse</name>
    <dbReference type="NCBI Taxonomy" id="10090"/>
    <lineage>
        <taxon>Eukaryota</taxon>
        <taxon>Metazoa</taxon>
        <taxon>Chordata</taxon>
        <taxon>Craniata</taxon>
        <taxon>Vertebrata</taxon>
        <taxon>Euteleostomi</taxon>
        <taxon>Mammalia</taxon>
        <taxon>Eutheria</taxon>
        <taxon>Euarchontoglires</taxon>
        <taxon>Glires</taxon>
        <taxon>Rodentia</taxon>
        <taxon>Myomorpha</taxon>
        <taxon>Muroidea</taxon>
        <taxon>Muridae</taxon>
        <taxon>Murinae</taxon>
        <taxon>Mus</taxon>
        <taxon>Mus</taxon>
    </lineage>
</organism>
<dbReference type="EMBL" id="AK008801">
    <property type="protein sequence ID" value="BAB25903.1"/>
    <property type="molecule type" value="mRNA"/>
</dbReference>
<dbReference type="EMBL" id="AK012550">
    <property type="protein sequence ID" value="BAB28310.1"/>
    <property type="molecule type" value="mRNA"/>
</dbReference>
<dbReference type="EMBL" id="AK145266">
    <property type="protein sequence ID" value="BAE26334.1"/>
    <property type="molecule type" value="mRNA"/>
</dbReference>
<dbReference type="EMBL" id="AK147113">
    <property type="protein sequence ID" value="BAE27685.1"/>
    <property type="molecule type" value="mRNA"/>
</dbReference>
<dbReference type="EMBL" id="BC061074">
    <property type="protein sequence ID" value="AAH61074.1"/>
    <property type="molecule type" value="mRNA"/>
</dbReference>
<dbReference type="CCDS" id="CCDS18623.1"/>
<dbReference type="RefSeq" id="NP_080307.1">
    <property type="nucleotide sequence ID" value="NM_026031.4"/>
</dbReference>
<dbReference type="SMR" id="Q9CZJ1"/>
<dbReference type="BioGRID" id="212015">
    <property type="interactions" value="42"/>
</dbReference>
<dbReference type="FunCoup" id="Q9CZJ1">
    <property type="interactions" value="1823"/>
</dbReference>
<dbReference type="STRING" id="10090.ENSMUSP00000030738"/>
<dbReference type="iPTMnet" id="Q9CZJ1"/>
<dbReference type="PhosphoSitePlus" id="Q9CZJ1"/>
<dbReference type="jPOST" id="Q9CZJ1"/>
<dbReference type="PaxDb" id="10090-ENSMUSP00000030738"/>
<dbReference type="PeptideAtlas" id="Q9CZJ1"/>
<dbReference type="ProteomicsDB" id="300204"/>
<dbReference type="Pumba" id="Q9CZJ1"/>
<dbReference type="Antibodypedia" id="31826">
    <property type="antibodies" value="133 antibodies from 19 providers"/>
</dbReference>
<dbReference type="DNASU" id="67205"/>
<dbReference type="Ensembl" id="ENSMUST00000030738.8">
    <property type="protein sequence ID" value="ENSMUSP00000030738.8"/>
    <property type="gene ID" value="ENSMUSG00000028907.8"/>
</dbReference>
<dbReference type="GeneID" id="67205"/>
<dbReference type="KEGG" id="mmu:67205"/>
<dbReference type="UCSC" id="uc008uqu.1">
    <property type="organism name" value="mouse"/>
</dbReference>
<dbReference type="AGR" id="MGI:1914455"/>
<dbReference type="CTD" id="51118"/>
<dbReference type="MGI" id="MGI:1914455">
    <property type="gene designation" value="Utp11"/>
</dbReference>
<dbReference type="VEuPathDB" id="HostDB:ENSMUSG00000028907"/>
<dbReference type="eggNOG" id="KOG3237">
    <property type="taxonomic scope" value="Eukaryota"/>
</dbReference>
<dbReference type="GeneTree" id="ENSGT00390000005813"/>
<dbReference type="HOGENOM" id="CLU_061887_2_1_1"/>
<dbReference type="InParanoid" id="Q9CZJ1"/>
<dbReference type="OMA" id="DLKYVVM"/>
<dbReference type="OrthoDB" id="29058at2759"/>
<dbReference type="PhylomeDB" id="Q9CZJ1"/>
<dbReference type="TreeFam" id="TF314171"/>
<dbReference type="Reactome" id="R-MMU-6791226">
    <property type="pathway name" value="Major pathway of rRNA processing in the nucleolus and cytosol"/>
</dbReference>
<dbReference type="BioGRID-ORCS" id="67205">
    <property type="hits" value="27 hits in 80 CRISPR screens"/>
</dbReference>
<dbReference type="ChiTaRS" id="Utp11">
    <property type="organism name" value="mouse"/>
</dbReference>
<dbReference type="PRO" id="PR:Q9CZJ1"/>
<dbReference type="Proteomes" id="UP000000589">
    <property type="component" value="Chromosome 4"/>
</dbReference>
<dbReference type="RNAct" id="Q9CZJ1">
    <property type="molecule type" value="protein"/>
</dbReference>
<dbReference type="Bgee" id="ENSMUSG00000028907">
    <property type="expression patterns" value="Expressed in floor plate of midbrain and 250 other cell types or tissues"/>
</dbReference>
<dbReference type="GO" id="GO:0005737">
    <property type="term" value="C:cytoplasm"/>
    <property type="evidence" value="ECO:0000250"/>
    <property type="project" value="HGNC"/>
</dbReference>
<dbReference type="GO" id="GO:0005829">
    <property type="term" value="C:cytosol"/>
    <property type="evidence" value="ECO:0007669"/>
    <property type="project" value="Ensembl"/>
</dbReference>
<dbReference type="GO" id="GO:0005615">
    <property type="term" value="C:extracellular space"/>
    <property type="evidence" value="ECO:0000250"/>
    <property type="project" value="HGNC"/>
</dbReference>
<dbReference type="GO" id="GO:0005730">
    <property type="term" value="C:nucleolus"/>
    <property type="evidence" value="ECO:0000250"/>
    <property type="project" value="HGNC"/>
</dbReference>
<dbReference type="GO" id="GO:0005654">
    <property type="term" value="C:nucleoplasm"/>
    <property type="evidence" value="ECO:0007669"/>
    <property type="project" value="Ensembl"/>
</dbReference>
<dbReference type="GO" id="GO:0032040">
    <property type="term" value="C:small-subunit processome"/>
    <property type="evidence" value="ECO:0000250"/>
    <property type="project" value="UniProtKB"/>
</dbReference>
<dbReference type="GO" id="GO:0007399">
    <property type="term" value="P:nervous system development"/>
    <property type="evidence" value="ECO:0000250"/>
    <property type="project" value="HGNC-UCL"/>
</dbReference>
<dbReference type="GO" id="GO:0043065">
    <property type="term" value="P:positive regulation of apoptotic process"/>
    <property type="evidence" value="ECO:0000250"/>
    <property type="project" value="HGNC"/>
</dbReference>
<dbReference type="GO" id="GO:0042274">
    <property type="term" value="P:ribosomal small subunit biogenesis"/>
    <property type="evidence" value="ECO:0000250"/>
    <property type="project" value="UniProtKB"/>
</dbReference>
<dbReference type="GO" id="GO:0006364">
    <property type="term" value="P:rRNA processing"/>
    <property type="evidence" value="ECO:0007669"/>
    <property type="project" value="UniProtKB-KW"/>
</dbReference>
<dbReference type="InterPro" id="IPR007144">
    <property type="entry name" value="SSU_processome_Utp11"/>
</dbReference>
<dbReference type="PANTHER" id="PTHR12838">
    <property type="entry name" value="U3 SMALL NUCLEOLAR RNA-ASSOCIATED PROTEIN 11"/>
    <property type="match status" value="1"/>
</dbReference>
<dbReference type="PANTHER" id="PTHR12838:SF0">
    <property type="entry name" value="U3 SMALL NUCLEOLAR RNA-ASSOCIATED PROTEIN 11-RELATED"/>
    <property type="match status" value="1"/>
</dbReference>
<dbReference type="Pfam" id="PF03998">
    <property type="entry name" value="Utp11"/>
    <property type="match status" value="1"/>
</dbReference>
<dbReference type="PIRSF" id="PIRSF015952">
    <property type="entry name" value="U3snoRNP11"/>
    <property type="match status" value="1"/>
</dbReference>
<comment type="function">
    <text evidence="1">Part of the small subunit (SSU) processome, first precursor of the small eukaryotic ribosomal subunit. During the assembly of the SSU processome in the nucleolus, many ribosome biogenesis factors, an RNA chaperone and ribosomal proteins associate with the nascent pre-rRNA and work in concert to generate RNA folding, modifications, rearrangements and cleavage as well as targeted degradation of pre-ribosomal RNA by the RNA exosome. Involved in nucleolar processing of pre-18S ribosomal RNA.</text>
</comment>
<comment type="subunit">
    <text evidence="1">Part of the small subunit (SSU) processome, composed of more than 70 proteins and the RNA chaperone small nucleolar RNA (snoRNA) U3.</text>
</comment>
<comment type="subcellular location">
    <subcellularLocation>
        <location evidence="1">Nucleus</location>
        <location evidence="1">Nucleolus</location>
    </subcellularLocation>
</comment>
<comment type="similarity">
    <text evidence="3">Belongs to the UTP11 family.</text>
</comment>
<protein>
    <recommendedName>
        <fullName>Probable U3 small nucleolar RNA-associated protein 11</fullName>
        <shortName>U3 snoRNA-associated protein 11</shortName>
    </recommendedName>
    <alternativeName>
        <fullName>UTP11-like protein</fullName>
    </alternativeName>
</protein>